<gene>
    <name type="primary">NIP2-1</name>
    <name type="synonym">NLM4</name>
    <name type="ordered locus">At2g34390</name>
    <name type="ORF">T31E10.27</name>
</gene>
<evidence type="ECO:0000250" key="1">
    <source>
        <dbReference type="UniProtKB" id="P43286"/>
    </source>
</evidence>
<evidence type="ECO:0000250" key="2">
    <source>
        <dbReference type="UniProtKB" id="P61837"/>
    </source>
</evidence>
<evidence type="ECO:0000255" key="3"/>
<evidence type="ECO:0000269" key="4">
    <source>
    </source>
</evidence>
<evidence type="ECO:0000305" key="5"/>
<organism>
    <name type="scientific">Arabidopsis thaliana</name>
    <name type="common">Mouse-ear cress</name>
    <dbReference type="NCBI Taxonomy" id="3702"/>
    <lineage>
        <taxon>Eukaryota</taxon>
        <taxon>Viridiplantae</taxon>
        <taxon>Streptophyta</taxon>
        <taxon>Embryophyta</taxon>
        <taxon>Tracheophyta</taxon>
        <taxon>Spermatophyta</taxon>
        <taxon>Magnoliopsida</taxon>
        <taxon>eudicotyledons</taxon>
        <taxon>Gunneridae</taxon>
        <taxon>Pentapetalae</taxon>
        <taxon>rosids</taxon>
        <taxon>malvids</taxon>
        <taxon>Brassicales</taxon>
        <taxon>Brassicaceae</taxon>
        <taxon>Camelineae</taxon>
        <taxon>Arabidopsis</taxon>
    </lineage>
</organism>
<sequence>MDDISVSKSNHGNVVVLNIKASSLADTSLPSNKHESSSPPLLSVHFLQKLLAELVGTYYLIFAGCAAIAVNAQHNHVVTLVGIAVVWGIVIMVLVYCLGHLSAHFNPAVTLALASSQRFPLNQVPAYITVQVIGSTLASATLRLLFDLNNDVCSKKHDVFLGSSPSGSDLQAFVMEFIITGFLMLVVCAVTTTKRTTEELEGLIIGATVTLNVIFAGEVSGASMNPARSIGPALVWGCYKGIWIYLLAPTLGAVSGALIHKMLPSIQNAEPEFSKTGSSHKRVTDLPL</sequence>
<keyword id="KW-0007">Acetylation</keyword>
<keyword id="KW-0256">Endoplasmic reticulum</keyword>
<keyword id="KW-0472">Membrane</keyword>
<keyword id="KW-0597">Phosphoprotein</keyword>
<keyword id="KW-1185">Reference proteome</keyword>
<keyword id="KW-0677">Repeat</keyword>
<keyword id="KW-0812">Transmembrane</keyword>
<keyword id="KW-1133">Transmembrane helix</keyword>
<keyword id="KW-0813">Transport</keyword>
<proteinExistence type="evidence at transcript level"/>
<comment type="function">
    <text evidence="4">Low water transport activity in yeast cells.</text>
</comment>
<comment type="subcellular location">
    <subcellularLocation>
        <location evidence="4">Endoplasmic reticulum membrane</location>
        <topology evidence="4">Multi-pass membrane protein</topology>
    </subcellularLocation>
</comment>
<comment type="tissue specificity">
    <text evidence="4">Specifically expressed in roots with high expression in root elongation zone and root stele.</text>
</comment>
<comment type="domain">
    <text>Aquaporins contain two tandem repeats each containing three membrane-spanning domains and a pore-forming loop with the signature motif Asn-Pro-Ala (NPA).</text>
</comment>
<comment type="similarity">
    <text evidence="5">Belongs to the MIP/aquaporin (TC 1.A.8) family. NIP (TC 1.A.8.12) subfamily.</text>
</comment>
<reference key="1">
    <citation type="submission" date="2000-03" db="EMBL/GenBank/DDBJ databases">
        <title>Functional characterisation of Arabidopsis thaliana aquaglyceroporins.</title>
        <authorList>
            <person name="Weig A.R."/>
            <person name="Jakob C.U."/>
        </authorList>
    </citation>
    <scope>NUCLEOTIDE SEQUENCE [MRNA]</scope>
</reference>
<reference key="2">
    <citation type="submission" date="2004-12" db="EMBL/GenBank/DDBJ databases">
        <authorList>
            <person name="Weig A.R."/>
        </authorList>
    </citation>
    <scope>SEQUENCE REVISION</scope>
</reference>
<reference key="3">
    <citation type="journal article" date="1999" name="Nature">
        <title>Sequence and analysis of chromosome 2 of the plant Arabidopsis thaliana.</title>
        <authorList>
            <person name="Lin X."/>
            <person name="Kaul S."/>
            <person name="Rounsley S.D."/>
            <person name="Shea T.P."/>
            <person name="Benito M.-I."/>
            <person name="Town C.D."/>
            <person name="Fujii C.Y."/>
            <person name="Mason T.M."/>
            <person name="Bowman C.L."/>
            <person name="Barnstead M.E."/>
            <person name="Feldblyum T.V."/>
            <person name="Buell C.R."/>
            <person name="Ketchum K.A."/>
            <person name="Lee J.J."/>
            <person name="Ronning C.M."/>
            <person name="Koo H.L."/>
            <person name="Moffat K.S."/>
            <person name="Cronin L.A."/>
            <person name="Shen M."/>
            <person name="Pai G."/>
            <person name="Van Aken S."/>
            <person name="Umayam L."/>
            <person name="Tallon L.J."/>
            <person name="Gill J.E."/>
            <person name="Adams M.D."/>
            <person name="Carrera A.J."/>
            <person name="Creasy T.H."/>
            <person name="Goodman H.M."/>
            <person name="Somerville C.R."/>
            <person name="Copenhaver G.P."/>
            <person name="Preuss D."/>
            <person name="Nierman W.C."/>
            <person name="White O."/>
            <person name="Eisen J.A."/>
            <person name="Salzberg S.L."/>
            <person name="Fraser C.M."/>
            <person name="Venter J.C."/>
        </authorList>
    </citation>
    <scope>NUCLEOTIDE SEQUENCE [LARGE SCALE GENOMIC DNA]</scope>
    <source>
        <strain>cv. Columbia</strain>
    </source>
</reference>
<reference key="4">
    <citation type="journal article" date="2017" name="Plant J.">
        <title>Araport11: a complete reannotation of the Arabidopsis thaliana reference genome.</title>
        <authorList>
            <person name="Cheng C.Y."/>
            <person name="Krishnakumar V."/>
            <person name="Chan A.P."/>
            <person name="Thibaud-Nissen F."/>
            <person name="Schobel S."/>
            <person name="Town C.D."/>
        </authorList>
    </citation>
    <scope>GENOME REANNOTATION</scope>
    <source>
        <strain>cv. Columbia</strain>
    </source>
</reference>
<reference key="5">
    <citation type="submission" date="2006-06" db="EMBL/GenBank/DDBJ databases">
        <title>Arabidopsis ORF clone.</title>
        <authorList>
            <person name="Quinitio C."/>
            <person name="Chen H."/>
            <person name="Kim C.J."/>
            <person name="Shinn P."/>
            <person name="Ecker J.R."/>
        </authorList>
    </citation>
    <scope>NUCLEOTIDE SEQUENCE [LARGE SCALE MRNA]</scope>
    <source>
        <strain>cv. Columbia</strain>
    </source>
</reference>
<reference key="6">
    <citation type="journal article" date="2002" name="Genome Biol.">
        <title>From genome to function: the Arabidopsis aquaporins.</title>
        <authorList>
            <person name="Quigley F."/>
            <person name="Rosenberg J.M."/>
            <person name="Shachar-Hill Y."/>
            <person name="Bohnert H.J."/>
        </authorList>
    </citation>
    <scope>NOMENCLATURE</scope>
</reference>
<reference key="7">
    <citation type="journal article" date="2006" name="Plant Cell Physiol.">
        <title>Aquaporin NIP2;1 is mainly localized to the ER membrane and shows root-specific accumulation in Arabidopsis thaliana.</title>
        <authorList>
            <person name="Mizutani M."/>
            <person name="Watanabe S."/>
            <person name="Nakagawa T."/>
            <person name="Maeshima M."/>
        </authorList>
    </citation>
    <scope>FUNCTION</scope>
    <scope>SUBCELLULAR LOCATION</scope>
    <scope>TISSUE SPECIFICITY</scope>
</reference>
<accession>Q8W037</accession>
<accession>O64706</accession>
<accession>Q1ECK8</accession>
<dbReference type="EMBL" id="AJ276475">
    <property type="protein sequence ID" value="CAC81707.2"/>
    <property type="molecule type" value="mRNA"/>
</dbReference>
<dbReference type="EMBL" id="AC004077">
    <property type="protein sequence ID" value="AAC26712.1"/>
    <property type="molecule type" value="Genomic_DNA"/>
</dbReference>
<dbReference type="EMBL" id="AC004481">
    <property type="protein sequence ID" value="AAM14952.1"/>
    <property type="molecule type" value="Genomic_DNA"/>
</dbReference>
<dbReference type="EMBL" id="CP002685">
    <property type="protein sequence ID" value="AEC08967.1"/>
    <property type="molecule type" value="Genomic_DNA"/>
</dbReference>
<dbReference type="EMBL" id="BT025726">
    <property type="protein sequence ID" value="ABF82629.1"/>
    <property type="molecule type" value="mRNA"/>
</dbReference>
<dbReference type="PIR" id="T02327">
    <property type="entry name" value="T02327"/>
</dbReference>
<dbReference type="RefSeq" id="NP_180986.1">
    <property type="nucleotide sequence ID" value="NM_128991.5"/>
</dbReference>
<dbReference type="SMR" id="Q8W037"/>
<dbReference type="BioGRID" id="3349">
    <property type="interactions" value="24"/>
</dbReference>
<dbReference type="FunCoup" id="Q8W037">
    <property type="interactions" value="29"/>
</dbReference>
<dbReference type="IntAct" id="Q8W037">
    <property type="interactions" value="24"/>
</dbReference>
<dbReference type="STRING" id="3702.Q8W037"/>
<dbReference type="TCDB" id="1.A.8.12.4">
    <property type="family name" value="the major intrinsic protein (mip) family"/>
</dbReference>
<dbReference type="iPTMnet" id="Q8W037"/>
<dbReference type="PaxDb" id="3702-AT2G34390.1"/>
<dbReference type="EnsemblPlants" id="AT2G34390.1">
    <property type="protein sequence ID" value="AT2G34390.1"/>
    <property type="gene ID" value="AT2G34390"/>
</dbReference>
<dbReference type="GeneID" id="818002"/>
<dbReference type="Gramene" id="AT2G34390.1">
    <property type="protein sequence ID" value="AT2G34390.1"/>
    <property type="gene ID" value="AT2G34390"/>
</dbReference>
<dbReference type="KEGG" id="ath:AT2G34390"/>
<dbReference type="Araport" id="AT2G34390"/>
<dbReference type="TAIR" id="AT2G34390">
    <property type="gene designation" value="NIP2"/>
</dbReference>
<dbReference type="eggNOG" id="KOG0223">
    <property type="taxonomic scope" value="Eukaryota"/>
</dbReference>
<dbReference type="HOGENOM" id="CLU_020019_3_1_1"/>
<dbReference type="InParanoid" id="Q8W037"/>
<dbReference type="OMA" id="MEFVITC"/>
<dbReference type="PhylomeDB" id="Q8W037"/>
<dbReference type="PRO" id="PR:Q8W037"/>
<dbReference type="Proteomes" id="UP000006548">
    <property type="component" value="Chromosome 2"/>
</dbReference>
<dbReference type="ExpressionAtlas" id="Q8W037">
    <property type="expression patterns" value="baseline and differential"/>
</dbReference>
<dbReference type="GO" id="GO:0005783">
    <property type="term" value="C:endoplasmic reticulum"/>
    <property type="evidence" value="ECO:0000314"/>
    <property type="project" value="TAIR"/>
</dbReference>
<dbReference type="GO" id="GO:0005789">
    <property type="term" value="C:endoplasmic reticulum membrane"/>
    <property type="evidence" value="ECO:0007669"/>
    <property type="project" value="UniProtKB-SubCell"/>
</dbReference>
<dbReference type="GO" id="GO:0005886">
    <property type="term" value="C:plasma membrane"/>
    <property type="evidence" value="ECO:0000314"/>
    <property type="project" value="TAIR"/>
</dbReference>
<dbReference type="GO" id="GO:0015267">
    <property type="term" value="F:channel activity"/>
    <property type="evidence" value="ECO:0007669"/>
    <property type="project" value="InterPro"/>
</dbReference>
<dbReference type="GO" id="GO:0015129">
    <property type="term" value="F:lactate transmembrane transporter activity"/>
    <property type="evidence" value="ECO:0000314"/>
    <property type="project" value="TAIR"/>
</dbReference>
<dbReference type="GO" id="GO:0015727">
    <property type="term" value="P:lactate transport"/>
    <property type="evidence" value="ECO:0000314"/>
    <property type="project" value="TAIR"/>
</dbReference>
<dbReference type="GO" id="GO:0001666">
    <property type="term" value="P:response to hypoxia"/>
    <property type="evidence" value="ECO:0000314"/>
    <property type="project" value="TAIR"/>
</dbReference>
<dbReference type="CDD" id="cd00333">
    <property type="entry name" value="MIP"/>
    <property type="match status" value="1"/>
</dbReference>
<dbReference type="FunFam" id="1.20.1080.10:FF:000029">
    <property type="entry name" value="Aquaporin NIP1-1"/>
    <property type="match status" value="1"/>
</dbReference>
<dbReference type="Gene3D" id="1.20.1080.10">
    <property type="entry name" value="Glycerol uptake facilitator protein"/>
    <property type="match status" value="1"/>
</dbReference>
<dbReference type="InterPro" id="IPR023271">
    <property type="entry name" value="Aquaporin-like"/>
</dbReference>
<dbReference type="InterPro" id="IPR034294">
    <property type="entry name" value="Aquaporin_transptr"/>
</dbReference>
<dbReference type="InterPro" id="IPR000425">
    <property type="entry name" value="MIP"/>
</dbReference>
<dbReference type="InterPro" id="IPR022357">
    <property type="entry name" value="MIP_CS"/>
</dbReference>
<dbReference type="NCBIfam" id="TIGR00861">
    <property type="entry name" value="MIP"/>
    <property type="match status" value="1"/>
</dbReference>
<dbReference type="PANTHER" id="PTHR45724">
    <property type="entry name" value="AQUAPORIN NIP2-1"/>
    <property type="match status" value="1"/>
</dbReference>
<dbReference type="PANTHER" id="PTHR45724:SF27">
    <property type="entry name" value="AQUAPORIN NIP2-1-RELATED"/>
    <property type="match status" value="1"/>
</dbReference>
<dbReference type="Pfam" id="PF00230">
    <property type="entry name" value="MIP"/>
    <property type="match status" value="1"/>
</dbReference>
<dbReference type="PRINTS" id="PR00783">
    <property type="entry name" value="MINTRINSICP"/>
</dbReference>
<dbReference type="SUPFAM" id="SSF81338">
    <property type="entry name" value="Aquaporin-like"/>
    <property type="match status" value="1"/>
</dbReference>
<dbReference type="PROSITE" id="PS00221">
    <property type="entry name" value="MIP"/>
    <property type="match status" value="1"/>
</dbReference>
<name>NIP21_ARATH</name>
<feature type="chain" id="PRO_0000064064" description="Aquaporin NIP2-1">
    <location>
        <begin position="1"/>
        <end position="288"/>
    </location>
</feature>
<feature type="transmembrane region" description="Helical; Name=1" evidence="3">
    <location>
        <begin position="50"/>
        <end position="70"/>
    </location>
</feature>
<feature type="transmembrane region" description="Helical; Name=2" evidence="3">
    <location>
        <begin position="77"/>
        <end position="97"/>
    </location>
</feature>
<feature type="transmembrane region" description="Helical; Name=3" evidence="3">
    <location>
        <begin position="126"/>
        <end position="146"/>
    </location>
</feature>
<feature type="transmembrane region" description="Helical; Name=4" evidence="3">
    <location>
        <begin position="170"/>
        <end position="190"/>
    </location>
</feature>
<feature type="transmembrane region" description="Helical; Name=5" evidence="3">
    <location>
        <begin position="202"/>
        <end position="222"/>
    </location>
</feature>
<feature type="transmembrane region" description="Helical; Name=6" evidence="3">
    <location>
        <begin position="234"/>
        <end position="254"/>
    </location>
</feature>
<feature type="short sequence motif" description="NPA 1">
    <location>
        <begin position="106"/>
        <end position="108"/>
    </location>
</feature>
<feature type="short sequence motif" description="NPA 2">
    <location>
        <begin position="225"/>
        <end position="227"/>
    </location>
</feature>
<feature type="modified residue" description="N-acetylmethionine" evidence="2">
    <location>
        <position position="1"/>
    </location>
</feature>
<feature type="modified residue" description="Phosphoserine" evidence="1">
    <location>
        <position position="278"/>
    </location>
</feature>
<protein>
    <recommendedName>
        <fullName>Aquaporin NIP2-1</fullName>
    </recommendedName>
    <alternativeName>
        <fullName>NOD26-like intrinsic protein 2-1</fullName>
        <shortName>AtNIP2;1</shortName>
    </alternativeName>
    <alternativeName>
        <fullName>Nodulin-26-like major intrinsic protein 4</fullName>
        <shortName>NodLikeMip4</shortName>
        <shortName>Protein NLM4</shortName>
    </alternativeName>
</protein>